<evidence type="ECO:0000256" key="1">
    <source>
        <dbReference type="SAM" id="MobiDB-lite"/>
    </source>
</evidence>
<evidence type="ECO:0000305" key="2"/>
<feature type="chain" id="PRO_0000296626" description="Putative uncharacterized protein encoded by LINC00304">
    <location>
        <begin position="1"/>
        <end position="145"/>
    </location>
</feature>
<feature type="region of interest" description="Disordered" evidence="1">
    <location>
        <begin position="62"/>
        <end position="145"/>
    </location>
</feature>
<feature type="compositionally biased region" description="Pro residues" evidence="1">
    <location>
        <begin position="84"/>
        <end position="95"/>
    </location>
</feature>
<feature type="sequence conflict" description="In Ref. 1; BAC04270." evidence="2" ref="1">
    <original>L</original>
    <variation>S</variation>
    <location>
        <position position="4"/>
    </location>
</feature>
<proteinExistence type="uncertain"/>
<dbReference type="EMBL" id="AK094020">
    <property type="protein sequence ID" value="BAC04270.1"/>
    <property type="molecule type" value="mRNA"/>
</dbReference>
<dbReference type="EMBL" id="AC009113">
    <property type="status" value="NOT_ANNOTATED_CDS"/>
    <property type="molecule type" value="Genomic_DNA"/>
</dbReference>
<dbReference type="BioMuta" id="HGNC:26713"/>
<dbReference type="AGR" id="HGNC:26713"/>
<dbReference type="GeneCards" id="LINC00304"/>
<dbReference type="HGNC" id="HGNC:26713">
    <property type="gene designation" value="LINC00304"/>
</dbReference>
<dbReference type="neXtProt" id="NX_Q8N9R0"/>
<dbReference type="InParanoid" id="Q8N9R0"/>
<dbReference type="PAN-GO" id="Q8N9R0">
    <property type="GO annotations" value="0 GO annotations based on evolutionary models"/>
</dbReference>
<dbReference type="PathwayCommons" id="Q8N9R0"/>
<dbReference type="Pharos" id="Q8N9R0">
    <property type="development level" value="Tdark"/>
</dbReference>
<dbReference type="Proteomes" id="UP000005640">
    <property type="component" value="Unplaced"/>
</dbReference>
<dbReference type="RNAct" id="Q8N9R0">
    <property type="molecule type" value="protein"/>
</dbReference>
<organism>
    <name type="scientific">Homo sapiens</name>
    <name type="common">Human</name>
    <dbReference type="NCBI Taxonomy" id="9606"/>
    <lineage>
        <taxon>Eukaryota</taxon>
        <taxon>Metazoa</taxon>
        <taxon>Chordata</taxon>
        <taxon>Craniata</taxon>
        <taxon>Vertebrata</taxon>
        <taxon>Euteleostomi</taxon>
        <taxon>Mammalia</taxon>
        <taxon>Eutheria</taxon>
        <taxon>Euarchontoglires</taxon>
        <taxon>Primates</taxon>
        <taxon>Haplorrhini</taxon>
        <taxon>Catarrhini</taxon>
        <taxon>Hominidae</taxon>
        <taxon>Homo</taxon>
    </lineage>
</organism>
<sequence length="145" mass="15610">MQYLHCCLQIAPNQEGMVQAGGQGHGLARVVLRAVLSPPCWAPHSPCGSPAATEAGRLMRRLPSVGGRMTAPKTPRFLTRRPPASSPEDPPLPHPKTPRFLTQRPPASLPRRPRFLTLGPVSSHSSGDLRLWTAHQLPQQGGCPG</sequence>
<reference key="1">
    <citation type="journal article" date="2004" name="Nat. Genet.">
        <title>Complete sequencing and characterization of 21,243 full-length human cDNAs.</title>
        <authorList>
            <person name="Ota T."/>
            <person name="Suzuki Y."/>
            <person name="Nishikawa T."/>
            <person name="Otsuki T."/>
            <person name="Sugiyama T."/>
            <person name="Irie R."/>
            <person name="Wakamatsu A."/>
            <person name="Hayashi K."/>
            <person name="Sato H."/>
            <person name="Nagai K."/>
            <person name="Kimura K."/>
            <person name="Makita H."/>
            <person name="Sekine M."/>
            <person name="Obayashi M."/>
            <person name="Nishi T."/>
            <person name="Shibahara T."/>
            <person name="Tanaka T."/>
            <person name="Ishii S."/>
            <person name="Yamamoto J."/>
            <person name="Saito K."/>
            <person name="Kawai Y."/>
            <person name="Isono Y."/>
            <person name="Nakamura Y."/>
            <person name="Nagahari K."/>
            <person name="Murakami K."/>
            <person name="Yasuda T."/>
            <person name="Iwayanagi T."/>
            <person name="Wagatsuma M."/>
            <person name="Shiratori A."/>
            <person name="Sudo H."/>
            <person name="Hosoiri T."/>
            <person name="Kaku Y."/>
            <person name="Kodaira H."/>
            <person name="Kondo H."/>
            <person name="Sugawara M."/>
            <person name="Takahashi M."/>
            <person name="Kanda K."/>
            <person name="Yokoi T."/>
            <person name="Furuya T."/>
            <person name="Kikkawa E."/>
            <person name="Omura Y."/>
            <person name="Abe K."/>
            <person name="Kamihara K."/>
            <person name="Katsuta N."/>
            <person name="Sato K."/>
            <person name="Tanikawa M."/>
            <person name="Yamazaki M."/>
            <person name="Ninomiya K."/>
            <person name="Ishibashi T."/>
            <person name="Yamashita H."/>
            <person name="Murakawa K."/>
            <person name="Fujimori K."/>
            <person name="Tanai H."/>
            <person name="Kimata M."/>
            <person name="Watanabe M."/>
            <person name="Hiraoka S."/>
            <person name="Chiba Y."/>
            <person name="Ishida S."/>
            <person name="Ono Y."/>
            <person name="Takiguchi S."/>
            <person name="Watanabe S."/>
            <person name="Yosida M."/>
            <person name="Hotuta T."/>
            <person name="Kusano J."/>
            <person name="Kanehori K."/>
            <person name="Takahashi-Fujii A."/>
            <person name="Hara H."/>
            <person name="Tanase T.-O."/>
            <person name="Nomura Y."/>
            <person name="Togiya S."/>
            <person name="Komai F."/>
            <person name="Hara R."/>
            <person name="Takeuchi K."/>
            <person name="Arita M."/>
            <person name="Imose N."/>
            <person name="Musashino K."/>
            <person name="Yuuki H."/>
            <person name="Oshima A."/>
            <person name="Sasaki N."/>
            <person name="Aotsuka S."/>
            <person name="Yoshikawa Y."/>
            <person name="Matsunawa H."/>
            <person name="Ichihara T."/>
            <person name="Shiohata N."/>
            <person name="Sano S."/>
            <person name="Moriya S."/>
            <person name="Momiyama H."/>
            <person name="Satoh N."/>
            <person name="Takami S."/>
            <person name="Terashima Y."/>
            <person name="Suzuki O."/>
            <person name="Nakagawa S."/>
            <person name="Senoh A."/>
            <person name="Mizoguchi H."/>
            <person name="Goto Y."/>
            <person name="Shimizu F."/>
            <person name="Wakebe H."/>
            <person name="Hishigaki H."/>
            <person name="Watanabe T."/>
            <person name="Sugiyama A."/>
            <person name="Takemoto M."/>
            <person name="Kawakami B."/>
            <person name="Yamazaki M."/>
            <person name="Watanabe K."/>
            <person name="Kumagai A."/>
            <person name="Itakura S."/>
            <person name="Fukuzumi Y."/>
            <person name="Fujimori Y."/>
            <person name="Komiyama M."/>
            <person name="Tashiro H."/>
            <person name="Tanigami A."/>
            <person name="Fujiwara T."/>
            <person name="Ono T."/>
            <person name="Yamada K."/>
            <person name="Fujii Y."/>
            <person name="Ozaki K."/>
            <person name="Hirao M."/>
            <person name="Ohmori Y."/>
            <person name="Kawabata A."/>
            <person name="Hikiji T."/>
            <person name="Kobatake N."/>
            <person name="Inagaki H."/>
            <person name="Ikema Y."/>
            <person name="Okamoto S."/>
            <person name="Okitani R."/>
            <person name="Kawakami T."/>
            <person name="Noguchi S."/>
            <person name="Itoh T."/>
            <person name="Shigeta K."/>
            <person name="Senba T."/>
            <person name="Matsumura K."/>
            <person name="Nakajima Y."/>
            <person name="Mizuno T."/>
            <person name="Morinaga M."/>
            <person name="Sasaki M."/>
            <person name="Togashi T."/>
            <person name="Oyama M."/>
            <person name="Hata H."/>
            <person name="Watanabe M."/>
            <person name="Komatsu T."/>
            <person name="Mizushima-Sugano J."/>
            <person name="Satoh T."/>
            <person name="Shirai Y."/>
            <person name="Takahashi Y."/>
            <person name="Nakagawa K."/>
            <person name="Okumura K."/>
            <person name="Nagase T."/>
            <person name="Nomura N."/>
            <person name="Kikuchi H."/>
            <person name="Masuho Y."/>
            <person name="Yamashita R."/>
            <person name="Nakai K."/>
            <person name="Yada T."/>
            <person name="Nakamura Y."/>
            <person name="Ohara O."/>
            <person name="Isogai T."/>
            <person name="Sugano S."/>
        </authorList>
    </citation>
    <scope>NUCLEOTIDE SEQUENCE [LARGE SCALE MRNA]</scope>
    <source>
        <tissue>Uterus</tissue>
    </source>
</reference>
<reference key="2">
    <citation type="journal article" date="2004" name="Nature">
        <title>The sequence and analysis of duplication-rich human chromosome 16.</title>
        <authorList>
            <person name="Martin J."/>
            <person name="Han C."/>
            <person name="Gordon L.A."/>
            <person name="Terry A."/>
            <person name="Prabhakar S."/>
            <person name="She X."/>
            <person name="Xie G."/>
            <person name="Hellsten U."/>
            <person name="Chan Y.M."/>
            <person name="Altherr M."/>
            <person name="Couronne O."/>
            <person name="Aerts A."/>
            <person name="Bajorek E."/>
            <person name="Black S."/>
            <person name="Blumer H."/>
            <person name="Branscomb E."/>
            <person name="Brown N.C."/>
            <person name="Bruno W.J."/>
            <person name="Buckingham J.M."/>
            <person name="Callen D.F."/>
            <person name="Campbell C.S."/>
            <person name="Campbell M.L."/>
            <person name="Campbell E.W."/>
            <person name="Caoile C."/>
            <person name="Challacombe J.F."/>
            <person name="Chasteen L.A."/>
            <person name="Chertkov O."/>
            <person name="Chi H.C."/>
            <person name="Christensen M."/>
            <person name="Clark L.M."/>
            <person name="Cohn J.D."/>
            <person name="Denys M."/>
            <person name="Detter J.C."/>
            <person name="Dickson M."/>
            <person name="Dimitrijevic-Bussod M."/>
            <person name="Escobar J."/>
            <person name="Fawcett J.J."/>
            <person name="Flowers D."/>
            <person name="Fotopulos D."/>
            <person name="Glavina T."/>
            <person name="Gomez M."/>
            <person name="Gonzales E."/>
            <person name="Goodstein D."/>
            <person name="Goodwin L.A."/>
            <person name="Grady D.L."/>
            <person name="Grigoriev I."/>
            <person name="Groza M."/>
            <person name="Hammon N."/>
            <person name="Hawkins T."/>
            <person name="Haydu L."/>
            <person name="Hildebrand C.E."/>
            <person name="Huang W."/>
            <person name="Israni S."/>
            <person name="Jett J."/>
            <person name="Jewett P.B."/>
            <person name="Kadner K."/>
            <person name="Kimball H."/>
            <person name="Kobayashi A."/>
            <person name="Krawczyk M.-C."/>
            <person name="Leyba T."/>
            <person name="Longmire J.L."/>
            <person name="Lopez F."/>
            <person name="Lou Y."/>
            <person name="Lowry S."/>
            <person name="Ludeman T."/>
            <person name="Manohar C.F."/>
            <person name="Mark G.A."/>
            <person name="McMurray K.L."/>
            <person name="Meincke L.J."/>
            <person name="Morgan J."/>
            <person name="Moyzis R.K."/>
            <person name="Mundt M.O."/>
            <person name="Munk A.C."/>
            <person name="Nandkeshwar R.D."/>
            <person name="Pitluck S."/>
            <person name="Pollard M."/>
            <person name="Predki P."/>
            <person name="Parson-Quintana B."/>
            <person name="Ramirez L."/>
            <person name="Rash S."/>
            <person name="Retterer J."/>
            <person name="Ricke D.O."/>
            <person name="Robinson D.L."/>
            <person name="Rodriguez A."/>
            <person name="Salamov A."/>
            <person name="Saunders E.H."/>
            <person name="Scott D."/>
            <person name="Shough T."/>
            <person name="Stallings R.L."/>
            <person name="Stalvey M."/>
            <person name="Sutherland R.D."/>
            <person name="Tapia R."/>
            <person name="Tesmer J.G."/>
            <person name="Thayer N."/>
            <person name="Thompson L.S."/>
            <person name="Tice H."/>
            <person name="Torney D.C."/>
            <person name="Tran-Gyamfi M."/>
            <person name="Tsai M."/>
            <person name="Ulanovsky L.E."/>
            <person name="Ustaszewska A."/>
            <person name="Vo N."/>
            <person name="White P.S."/>
            <person name="Williams A.L."/>
            <person name="Wills P.L."/>
            <person name="Wu J.-R."/>
            <person name="Wu K."/>
            <person name="Yang J."/>
            <person name="DeJong P."/>
            <person name="Bruce D."/>
            <person name="Doggett N.A."/>
            <person name="Deaven L."/>
            <person name="Schmutz J."/>
            <person name="Grimwood J."/>
            <person name="Richardson P."/>
            <person name="Rokhsar D.S."/>
            <person name="Eichler E.E."/>
            <person name="Gilna P."/>
            <person name="Lucas S.M."/>
            <person name="Myers R.M."/>
            <person name="Rubin E.M."/>
            <person name="Pennacchio L.A."/>
        </authorList>
    </citation>
    <scope>NUCLEOTIDE SEQUENCE [LARGE SCALE GENOMIC DNA]</scope>
</reference>
<gene>
    <name type="primary">LINC00304</name>
    <name type="synonym">C16orf81</name>
    <name type="synonym">NCRNA00304</name>
</gene>
<comment type="caution">
    <text evidence="2">Product of a dubious CDS prediction. Probable non-coding RNA.</text>
</comment>
<name>CP081_HUMAN</name>
<protein>
    <recommendedName>
        <fullName>Putative uncharacterized protein encoded by LINC00304</fullName>
    </recommendedName>
</protein>
<keyword id="KW-1185">Reference proteome</keyword>
<accession>Q8N9R0</accession>